<keyword id="KW-0007">Acetylation</keyword>
<keyword id="KW-1064">Adaptive immunity</keyword>
<keyword id="KW-0963">Cytoplasm</keyword>
<keyword id="KW-0391">Immunity</keyword>
<keyword id="KW-0399">Innate immunity</keyword>
<keyword id="KW-1185">Reference proteome</keyword>
<keyword id="KW-0727">SH2 domain</keyword>
<feature type="chain" id="PRO_0000356884" description="SH2 domain-containing protein 1A">
    <location>
        <begin position="1"/>
        <end position="128"/>
    </location>
</feature>
<feature type="domain" description="SH2" evidence="4">
    <location>
        <begin position="6"/>
        <end position="102"/>
    </location>
</feature>
<feature type="region of interest" description="Interaction with FYN SH3 domain" evidence="3">
    <location>
        <begin position="67"/>
        <end position="92"/>
    </location>
</feature>
<feature type="region of interest" description="Disordered" evidence="5">
    <location>
        <begin position="103"/>
        <end position="128"/>
    </location>
</feature>
<feature type="compositionally biased region" description="Basic and acidic residues" evidence="5">
    <location>
        <begin position="116"/>
        <end position="128"/>
    </location>
</feature>
<feature type="modified residue" description="N6-acetyllysine" evidence="2">
    <location>
        <position position="89"/>
    </location>
</feature>
<organism>
    <name type="scientific">Sus scrofa</name>
    <name type="common">Pig</name>
    <dbReference type="NCBI Taxonomy" id="9823"/>
    <lineage>
        <taxon>Eukaryota</taxon>
        <taxon>Metazoa</taxon>
        <taxon>Chordata</taxon>
        <taxon>Craniata</taxon>
        <taxon>Vertebrata</taxon>
        <taxon>Euteleostomi</taxon>
        <taxon>Mammalia</taxon>
        <taxon>Eutheria</taxon>
        <taxon>Laurasiatheria</taxon>
        <taxon>Artiodactyla</taxon>
        <taxon>Suina</taxon>
        <taxon>Suidae</taxon>
        <taxon>Sus</taxon>
    </lineage>
</organism>
<name>SH21A_PIG</name>
<comment type="function">
    <text evidence="1 2 3">Cytoplasmic adapter regulating receptors of the signaling lymphocytic activation molecule (SLAM) family such as SLAMF1, CD244, LY9, CD84, SLAMF6 and SLAMF7. In SLAM signaling seems to cooperate with SH2D1B/EAT-2. Initially it has been proposed that association with SLAMF1 prevents SLAMF1 binding to inhibitory effectors including INPP5D/SHIP1 and PTPN11/SHP-2. However, by simultaneous interactions, recruits FYN which subsequently phosphorylates and activates SLAMF1. Positively regulates CD244/2B4- and CD84-mediated natural killer (NK) cell functions. Can also promote CD48-, SLAMF6 -, LY9-, and SLAMF7-mediated NK cell activation. In the context of NK cell-mediated cytotoxicity enhances conjugate formation with target cells (By similarity). May also regulate the activity of the neurotrophin receptors NTRK1, NTRK2 and NTRK3 (By similarity).</text>
</comment>
<comment type="subunit">
    <text evidence="1 2">Interacts with CD84, CD244, LY9, SLAMF1 and FYN. Interacts with NTRK1, NTRK2 and NTRK3 (By similarity).</text>
</comment>
<comment type="subcellular location">
    <subcellularLocation>
        <location evidence="2">Cytoplasm</location>
    </subcellularLocation>
</comment>
<evidence type="ECO:0000250" key="1">
    <source>
        <dbReference type="UniProtKB" id="B2RZ59"/>
    </source>
</evidence>
<evidence type="ECO:0000250" key="2">
    <source>
        <dbReference type="UniProtKB" id="O60880"/>
    </source>
</evidence>
<evidence type="ECO:0000250" key="3">
    <source>
        <dbReference type="UniProtKB" id="O88890"/>
    </source>
</evidence>
<evidence type="ECO:0000255" key="4">
    <source>
        <dbReference type="PROSITE-ProRule" id="PRU00191"/>
    </source>
</evidence>
<evidence type="ECO:0000256" key="5">
    <source>
        <dbReference type="SAM" id="MobiDB-lite"/>
    </source>
</evidence>
<reference key="1">
    <citation type="submission" date="2006-08" db="EMBL/GenBank/DDBJ databases">
        <authorList>
            <person name="Liu G.Y."/>
        </authorList>
    </citation>
    <scope>NUCLEOTIDE SEQUENCE [LARGE SCALE MRNA]</scope>
</reference>
<proteinExistence type="evidence at transcript level"/>
<accession>Q06AA1</accession>
<sequence>MDAVTVYHGKISRETGEKLLLATGLDGSYLLRDSESVPGVYCLCVLYQGYIYTYRVSHTETGSWIADTAPGVHKRFFRKIKNLISAFQKPDQGIVIPLQYPVEKKSSARSTQGATGRREDPDVFLKTP</sequence>
<gene>
    <name type="primary">SH2D1A</name>
</gene>
<protein>
    <recommendedName>
        <fullName>SH2 domain-containing protein 1A</fullName>
    </recommendedName>
</protein>
<dbReference type="EMBL" id="DQ972963">
    <property type="protein sequence ID" value="ABI96199.1"/>
    <property type="molecule type" value="mRNA"/>
</dbReference>
<dbReference type="RefSeq" id="NP_001072143.1">
    <property type="nucleotide sequence ID" value="NM_001078675.1"/>
</dbReference>
<dbReference type="SMR" id="Q06AA1"/>
<dbReference type="FunCoup" id="Q06AA1">
    <property type="interactions" value="196"/>
</dbReference>
<dbReference type="STRING" id="9823.ENSSSCP00000013442"/>
<dbReference type="PaxDb" id="9823-ENSSSCP00000013442"/>
<dbReference type="GeneID" id="780420"/>
<dbReference type="KEGG" id="ssc:780420"/>
<dbReference type="CTD" id="4068"/>
<dbReference type="eggNOG" id="KOG0565">
    <property type="taxonomic scope" value="Eukaryota"/>
</dbReference>
<dbReference type="InParanoid" id="Q06AA1"/>
<dbReference type="OrthoDB" id="10053436at2759"/>
<dbReference type="Proteomes" id="UP000008227">
    <property type="component" value="Unplaced"/>
</dbReference>
<dbReference type="Proteomes" id="UP000314985">
    <property type="component" value="Unplaced"/>
</dbReference>
<dbReference type="Proteomes" id="UP000694570">
    <property type="component" value="Unplaced"/>
</dbReference>
<dbReference type="Proteomes" id="UP000694571">
    <property type="component" value="Unplaced"/>
</dbReference>
<dbReference type="Proteomes" id="UP000694720">
    <property type="component" value="Unplaced"/>
</dbReference>
<dbReference type="Proteomes" id="UP000694722">
    <property type="component" value="Unplaced"/>
</dbReference>
<dbReference type="Proteomes" id="UP000694723">
    <property type="component" value="Unplaced"/>
</dbReference>
<dbReference type="Proteomes" id="UP000694724">
    <property type="component" value="Unplaced"/>
</dbReference>
<dbReference type="Proteomes" id="UP000694725">
    <property type="component" value="Unplaced"/>
</dbReference>
<dbReference type="Proteomes" id="UP000694726">
    <property type="component" value="Unplaced"/>
</dbReference>
<dbReference type="Proteomes" id="UP000694727">
    <property type="component" value="Unplaced"/>
</dbReference>
<dbReference type="Proteomes" id="UP000694728">
    <property type="component" value="Unplaced"/>
</dbReference>
<dbReference type="GO" id="GO:0005737">
    <property type="term" value="C:cytoplasm"/>
    <property type="evidence" value="ECO:0007669"/>
    <property type="project" value="UniProtKB-SubCell"/>
</dbReference>
<dbReference type="GO" id="GO:0002250">
    <property type="term" value="P:adaptive immune response"/>
    <property type="evidence" value="ECO:0007669"/>
    <property type="project" value="UniProtKB-KW"/>
</dbReference>
<dbReference type="GO" id="GO:0007267">
    <property type="term" value="P:cell-cell signaling"/>
    <property type="evidence" value="ECO:0007669"/>
    <property type="project" value="InterPro"/>
</dbReference>
<dbReference type="GO" id="GO:0006968">
    <property type="term" value="P:cellular defense response"/>
    <property type="evidence" value="ECO:0007669"/>
    <property type="project" value="InterPro"/>
</dbReference>
<dbReference type="GO" id="GO:0045087">
    <property type="term" value="P:innate immune response"/>
    <property type="evidence" value="ECO:0007669"/>
    <property type="project" value="UniProtKB-KW"/>
</dbReference>
<dbReference type="CDD" id="cd10400">
    <property type="entry name" value="SH2_SAP1a"/>
    <property type="match status" value="1"/>
</dbReference>
<dbReference type="FunFam" id="3.30.505.10:FF:000062">
    <property type="entry name" value="SH2 domain-containing protein 1A"/>
    <property type="match status" value="1"/>
</dbReference>
<dbReference type="Gene3D" id="3.30.505.10">
    <property type="entry name" value="SH2 domain"/>
    <property type="match status" value="1"/>
</dbReference>
<dbReference type="InterPro" id="IPR000980">
    <property type="entry name" value="SH2"/>
</dbReference>
<dbReference type="InterPro" id="IPR036860">
    <property type="entry name" value="SH2_dom_sf"/>
</dbReference>
<dbReference type="InterPro" id="IPR017289">
    <property type="entry name" value="SH2_prot_1A"/>
</dbReference>
<dbReference type="InterPro" id="IPR035876">
    <property type="entry name" value="SH2D1A_SH2"/>
</dbReference>
<dbReference type="PANTHER" id="PTHR46051:SF3">
    <property type="entry name" value="PHOSPHATIDYLINOSITOL 3,4,5-TRISPHOSPHATE 5-PHOSPHATASE 1"/>
    <property type="match status" value="1"/>
</dbReference>
<dbReference type="PANTHER" id="PTHR46051">
    <property type="entry name" value="SH2 DOMAIN-CONTAINING PROTEIN"/>
    <property type="match status" value="1"/>
</dbReference>
<dbReference type="Pfam" id="PF00017">
    <property type="entry name" value="SH2"/>
    <property type="match status" value="1"/>
</dbReference>
<dbReference type="PIRSF" id="PIRSF037828">
    <property type="entry name" value="SH2_p1A"/>
    <property type="match status" value="1"/>
</dbReference>
<dbReference type="PRINTS" id="PR00401">
    <property type="entry name" value="SH2DOMAIN"/>
</dbReference>
<dbReference type="SMART" id="SM00252">
    <property type="entry name" value="SH2"/>
    <property type="match status" value="1"/>
</dbReference>
<dbReference type="SUPFAM" id="SSF55550">
    <property type="entry name" value="SH2 domain"/>
    <property type="match status" value="1"/>
</dbReference>
<dbReference type="PROSITE" id="PS50001">
    <property type="entry name" value="SH2"/>
    <property type="match status" value="1"/>
</dbReference>